<gene>
    <name type="primary">EVA1A</name>
    <name type="synonym">FAM176A</name>
    <name type="synonym">TMEM166</name>
    <name type="ORF">SP24</name>
</gene>
<keyword id="KW-0053">Apoptosis</keyword>
<keyword id="KW-0072">Autophagy</keyword>
<keyword id="KW-0256">Endoplasmic reticulum</keyword>
<keyword id="KW-0458">Lysosome</keyword>
<keyword id="KW-0472">Membrane</keyword>
<keyword id="KW-0597">Phosphoprotein</keyword>
<keyword id="KW-1267">Proteomics identification</keyword>
<keyword id="KW-1185">Reference proteome</keyword>
<keyword id="KW-0812">Transmembrane</keyword>
<keyword id="KW-1133">Transmembrane helix</keyword>
<reference key="1">
    <citation type="journal article" date="2004" name="Nat. Genet.">
        <title>Complete sequencing and characterization of 21,243 full-length human cDNAs.</title>
        <authorList>
            <person name="Ota T."/>
            <person name="Suzuki Y."/>
            <person name="Nishikawa T."/>
            <person name="Otsuki T."/>
            <person name="Sugiyama T."/>
            <person name="Irie R."/>
            <person name="Wakamatsu A."/>
            <person name="Hayashi K."/>
            <person name="Sato H."/>
            <person name="Nagai K."/>
            <person name="Kimura K."/>
            <person name="Makita H."/>
            <person name="Sekine M."/>
            <person name="Obayashi M."/>
            <person name="Nishi T."/>
            <person name="Shibahara T."/>
            <person name="Tanaka T."/>
            <person name="Ishii S."/>
            <person name="Yamamoto J."/>
            <person name="Saito K."/>
            <person name="Kawai Y."/>
            <person name="Isono Y."/>
            <person name="Nakamura Y."/>
            <person name="Nagahari K."/>
            <person name="Murakami K."/>
            <person name="Yasuda T."/>
            <person name="Iwayanagi T."/>
            <person name="Wagatsuma M."/>
            <person name="Shiratori A."/>
            <person name="Sudo H."/>
            <person name="Hosoiri T."/>
            <person name="Kaku Y."/>
            <person name="Kodaira H."/>
            <person name="Kondo H."/>
            <person name="Sugawara M."/>
            <person name="Takahashi M."/>
            <person name="Kanda K."/>
            <person name="Yokoi T."/>
            <person name="Furuya T."/>
            <person name="Kikkawa E."/>
            <person name="Omura Y."/>
            <person name="Abe K."/>
            <person name="Kamihara K."/>
            <person name="Katsuta N."/>
            <person name="Sato K."/>
            <person name="Tanikawa M."/>
            <person name="Yamazaki M."/>
            <person name="Ninomiya K."/>
            <person name="Ishibashi T."/>
            <person name="Yamashita H."/>
            <person name="Murakawa K."/>
            <person name="Fujimori K."/>
            <person name="Tanai H."/>
            <person name="Kimata M."/>
            <person name="Watanabe M."/>
            <person name="Hiraoka S."/>
            <person name="Chiba Y."/>
            <person name="Ishida S."/>
            <person name="Ono Y."/>
            <person name="Takiguchi S."/>
            <person name="Watanabe S."/>
            <person name="Yosida M."/>
            <person name="Hotuta T."/>
            <person name="Kusano J."/>
            <person name="Kanehori K."/>
            <person name="Takahashi-Fujii A."/>
            <person name="Hara H."/>
            <person name="Tanase T.-O."/>
            <person name="Nomura Y."/>
            <person name="Togiya S."/>
            <person name="Komai F."/>
            <person name="Hara R."/>
            <person name="Takeuchi K."/>
            <person name="Arita M."/>
            <person name="Imose N."/>
            <person name="Musashino K."/>
            <person name="Yuuki H."/>
            <person name="Oshima A."/>
            <person name="Sasaki N."/>
            <person name="Aotsuka S."/>
            <person name="Yoshikawa Y."/>
            <person name="Matsunawa H."/>
            <person name="Ichihara T."/>
            <person name="Shiohata N."/>
            <person name="Sano S."/>
            <person name="Moriya S."/>
            <person name="Momiyama H."/>
            <person name="Satoh N."/>
            <person name="Takami S."/>
            <person name="Terashima Y."/>
            <person name="Suzuki O."/>
            <person name="Nakagawa S."/>
            <person name="Senoh A."/>
            <person name="Mizoguchi H."/>
            <person name="Goto Y."/>
            <person name="Shimizu F."/>
            <person name="Wakebe H."/>
            <person name="Hishigaki H."/>
            <person name="Watanabe T."/>
            <person name="Sugiyama A."/>
            <person name="Takemoto M."/>
            <person name="Kawakami B."/>
            <person name="Yamazaki M."/>
            <person name="Watanabe K."/>
            <person name="Kumagai A."/>
            <person name="Itakura S."/>
            <person name="Fukuzumi Y."/>
            <person name="Fujimori Y."/>
            <person name="Komiyama M."/>
            <person name="Tashiro H."/>
            <person name="Tanigami A."/>
            <person name="Fujiwara T."/>
            <person name="Ono T."/>
            <person name="Yamada K."/>
            <person name="Fujii Y."/>
            <person name="Ozaki K."/>
            <person name="Hirao M."/>
            <person name="Ohmori Y."/>
            <person name="Kawabata A."/>
            <person name="Hikiji T."/>
            <person name="Kobatake N."/>
            <person name="Inagaki H."/>
            <person name="Ikema Y."/>
            <person name="Okamoto S."/>
            <person name="Okitani R."/>
            <person name="Kawakami T."/>
            <person name="Noguchi S."/>
            <person name="Itoh T."/>
            <person name="Shigeta K."/>
            <person name="Senba T."/>
            <person name="Matsumura K."/>
            <person name="Nakajima Y."/>
            <person name="Mizuno T."/>
            <person name="Morinaga M."/>
            <person name="Sasaki M."/>
            <person name="Togashi T."/>
            <person name="Oyama M."/>
            <person name="Hata H."/>
            <person name="Watanabe M."/>
            <person name="Komatsu T."/>
            <person name="Mizushima-Sugano J."/>
            <person name="Satoh T."/>
            <person name="Shirai Y."/>
            <person name="Takahashi Y."/>
            <person name="Nakagawa K."/>
            <person name="Okumura K."/>
            <person name="Nagase T."/>
            <person name="Nomura N."/>
            <person name="Kikuchi H."/>
            <person name="Masuho Y."/>
            <person name="Yamashita R."/>
            <person name="Nakai K."/>
            <person name="Yada T."/>
            <person name="Nakamura Y."/>
            <person name="Ohara O."/>
            <person name="Isogai T."/>
            <person name="Sugano S."/>
        </authorList>
    </citation>
    <scope>NUCLEOTIDE SEQUENCE [LARGE SCALE MRNA]</scope>
    <source>
        <tissue>Placenta</tissue>
    </source>
</reference>
<reference key="2">
    <citation type="journal article" date="2004" name="Proc. Natl. Acad. Sci. U.S.A.">
        <title>Large-scale cDNA transfection screening for genes related to cancer development and progression.</title>
        <authorList>
            <person name="Wan D."/>
            <person name="Gong Y."/>
            <person name="Qin W."/>
            <person name="Zhang P."/>
            <person name="Li J."/>
            <person name="Wei L."/>
            <person name="Zhou X."/>
            <person name="Li H."/>
            <person name="Qiu X."/>
            <person name="Zhong F."/>
            <person name="He L."/>
            <person name="Yu J."/>
            <person name="Yao G."/>
            <person name="Jiang H."/>
            <person name="Qian L."/>
            <person name="Yu Y."/>
            <person name="Shu H."/>
            <person name="Chen X."/>
            <person name="Xu H."/>
            <person name="Guo M."/>
            <person name="Pan Z."/>
            <person name="Chen Y."/>
            <person name="Ge C."/>
            <person name="Yang S."/>
            <person name="Gu J."/>
        </authorList>
    </citation>
    <scope>NUCLEOTIDE SEQUENCE [LARGE SCALE MRNA]</scope>
</reference>
<reference key="3">
    <citation type="submission" date="2004-06" db="EMBL/GenBank/DDBJ databases">
        <title>Cloning of human full open reading frames in Gateway(TM) system entry vector (pDONR201).</title>
        <authorList>
            <person name="Ebert L."/>
            <person name="Schick M."/>
            <person name="Neubert P."/>
            <person name="Schatten R."/>
            <person name="Henze S."/>
            <person name="Korn B."/>
        </authorList>
    </citation>
    <scope>NUCLEOTIDE SEQUENCE [LARGE SCALE MRNA]</scope>
</reference>
<reference key="4">
    <citation type="journal article" date="2005" name="Nature">
        <title>Generation and annotation of the DNA sequences of human chromosomes 2 and 4.</title>
        <authorList>
            <person name="Hillier L.W."/>
            <person name="Graves T.A."/>
            <person name="Fulton R.S."/>
            <person name="Fulton L.A."/>
            <person name="Pepin K.H."/>
            <person name="Minx P."/>
            <person name="Wagner-McPherson C."/>
            <person name="Layman D."/>
            <person name="Wylie K."/>
            <person name="Sekhon M."/>
            <person name="Becker M.C."/>
            <person name="Fewell G.A."/>
            <person name="Delehaunty K.D."/>
            <person name="Miner T.L."/>
            <person name="Nash W.E."/>
            <person name="Kremitzki C."/>
            <person name="Oddy L."/>
            <person name="Du H."/>
            <person name="Sun H."/>
            <person name="Bradshaw-Cordum H."/>
            <person name="Ali J."/>
            <person name="Carter J."/>
            <person name="Cordes M."/>
            <person name="Harris A."/>
            <person name="Isak A."/>
            <person name="van Brunt A."/>
            <person name="Nguyen C."/>
            <person name="Du F."/>
            <person name="Courtney L."/>
            <person name="Kalicki J."/>
            <person name="Ozersky P."/>
            <person name="Abbott S."/>
            <person name="Armstrong J."/>
            <person name="Belter E.A."/>
            <person name="Caruso L."/>
            <person name="Cedroni M."/>
            <person name="Cotton M."/>
            <person name="Davidson T."/>
            <person name="Desai A."/>
            <person name="Elliott G."/>
            <person name="Erb T."/>
            <person name="Fronick C."/>
            <person name="Gaige T."/>
            <person name="Haakenson W."/>
            <person name="Haglund K."/>
            <person name="Holmes A."/>
            <person name="Harkins R."/>
            <person name="Kim K."/>
            <person name="Kruchowski S.S."/>
            <person name="Strong C.M."/>
            <person name="Grewal N."/>
            <person name="Goyea E."/>
            <person name="Hou S."/>
            <person name="Levy A."/>
            <person name="Martinka S."/>
            <person name="Mead K."/>
            <person name="McLellan M.D."/>
            <person name="Meyer R."/>
            <person name="Randall-Maher J."/>
            <person name="Tomlinson C."/>
            <person name="Dauphin-Kohlberg S."/>
            <person name="Kozlowicz-Reilly A."/>
            <person name="Shah N."/>
            <person name="Swearengen-Shahid S."/>
            <person name="Snider J."/>
            <person name="Strong J.T."/>
            <person name="Thompson J."/>
            <person name="Yoakum M."/>
            <person name="Leonard S."/>
            <person name="Pearman C."/>
            <person name="Trani L."/>
            <person name="Radionenko M."/>
            <person name="Waligorski J.E."/>
            <person name="Wang C."/>
            <person name="Rock S.M."/>
            <person name="Tin-Wollam A.-M."/>
            <person name="Maupin R."/>
            <person name="Latreille P."/>
            <person name="Wendl M.C."/>
            <person name="Yang S.-P."/>
            <person name="Pohl C."/>
            <person name="Wallis J.W."/>
            <person name="Spieth J."/>
            <person name="Bieri T.A."/>
            <person name="Berkowicz N."/>
            <person name="Nelson J.O."/>
            <person name="Osborne J."/>
            <person name="Ding L."/>
            <person name="Meyer R."/>
            <person name="Sabo A."/>
            <person name="Shotland Y."/>
            <person name="Sinha P."/>
            <person name="Wohldmann P.E."/>
            <person name="Cook L.L."/>
            <person name="Hickenbotham M.T."/>
            <person name="Eldred J."/>
            <person name="Williams D."/>
            <person name="Jones T.A."/>
            <person name="She X."/>
            <person name="Ciccarelli F.D."/>
            <person name="Izaurralde E."/>
            <person name="Taylor J."/>
            <person name="Schmutz J."/>
            <person name="Myers R.M."/>
            <person name="Cox D.R."/>
            <person name="Huang X."/>
            <person name="McPherson J.D."/>
            <person name="Mardis E.R."/>
            <person name="Clifton S.W."/>
            <person name="Warren W.C."/>
            <person name="Chinwalla A.T."/>
            <person name="Eddy S.R."/>
            <person name="Marra M.A."/>
            <person name="Ovcharenko I."/>
            <person name="Furey T.S."/>
            <person name="Miller W."/>
            <person name="Eichler E.E."/>
            <person name="Bork P."/>
            <person name="Suyama M."/>
            <person name="Torrents D."/>
            <person name="Waterston R.H."/>
            <person name="Wilson R.K."/>
        </authorList>
    </citation>
    <scope>NUCLEOTIDE SEQUENCE [LARGE SCALE GENOMIC DNA]</scope>
</reference>
<reference key="5">
    <citation type="submission" date="2005-09" db="EMBL/GenBank/DDBJ databases">
        <authorList>
            <person name="Mural R.J."/>
            <person name="Istrail S."/>
            <person name="Sutton G.G."/>
            <person name="Florea L."/>
            <person name="Halpern A.L."/>
            <person name="Mobarry C.M."/>
            <person name="Lippert R."/>
            <person name="Walenz B."/>
            <person name="Shatkay H."/>
            <person name="Dew I."/>
            <person name="Miller J.R."/>
            <person name="Flanigan M.J."/>
            <person name="Edwards N.J."/>
            <person name="Bolanos R."/>
            <person name="Fasulo D."/>
            <person name="Halldorsson B.V."/>
            <person name="Hannenhalli S."/>
            <person name="Turner R."/>
            <person name="Yooseph S."/>
            <person name="Lu F."/>
            <person name="Nusskern D.R."/>
            <person name="Shue B.C."/>
            <person name="Zheng X.H."/>
            <person name="Zhong F."/>
            <person name="Delcher A.L."/>
            <person name="Huson D.H."/>
            <person name="Kravitz S.A."/>
            <person name="Mouchard L."/>
            <person name="Reinert K."/>
            <person name="Remington K.A."/>
            <person name="Clark A.G."/>
            <person name="Waterman M.S."/>
            <person name="Eichler E.E."/>
            <person name="Adams M.D."/>
            <person name="Hunkapiller M.W."/>
            <person name="Myers E.W."/>
            <person name="Venter J.C."/>
        </authorList>
    </citation>
    <scope>NUCLEOTIDE SEQUENCE [LARGE SCALE GENOMIC DNA]</scope>
</reference>
<reference key="6">
    <citation type="journal article" date="2004" name="Genome Res.">
        <title>The status, quality, and expansion of the NIH full-length cDNA project: the Mammalian Gene Collection (MGC).</title>
        <authorList>
            <consortium name="The MGC Project Team"/>
        </authorList>
    </citation>
    <scope>NUCLEOTIDE SEQUENCE [LARGE SCALE MRNA]</scope>
    <source>
        <tissue>Ovary</tissue>
        <tissue>Pancreas</tissue>
    </source>
</reference>
<reference key="7">
    <citation type="journal article" date="2007" name="Apoptosis">
        <title>TMEM166, a novel transmembrane protein, regulates cell autophagy and apoptosis.</title>
        <authorList>
            <person name="Wang L."/>
            <person name="Yu C."/>
            <person name="Lu Y."/>
            <person name="He P."/>
            <person name="Guo J."/>
            <person name="Zhang C."/>
            <person name="Song Q."/>
            <person name="Ma D."/>
            <person name="Shi T."/>
            <person name="Chen Y."/>
        </authorList>
    </citation>
    <scope>FUNCTION</scope>
    <scope>SUBCELLULAR LOCATION</scope>
    <scope>TISSUE SPECIFICITY</scope>
</reference>
<reference key="8">
    <citation type="journal article" date="2009" name="Autophagy">
        <title>High-throughput functional screening for autophagy-related genes and identification of TM9SF1 as an autophagosome-inducing gene.</title>
        <authorList>
            <person name="He P."/>
            <person name="Peng Z."/>
            <person name="Luo Y."/>
            <person name="Wang L."/>
            <person name="Yu P."/>
            <person name="Deng W."/>
            <person name="An Y."/>
            <person name="Shi T."/>
            <person name="Ma D."/>
        </authorList>
    </citation>
    <scope>FUNCTION</scope>
</reference>
<reference key="9">
    <citation type="journal article" date="2015" name="Cell">
        <title>A single kinase generates the majority of the secreted phosphoproteome.</title>
        <authorList>
            <person name="Tagliabracci V.S."/>
            <person name="Wiley S.E."/>
            <person name="Guo X."/>
            <person name="Kinch L.N."/>
            <person name="Durrant E."/>
            <person name="Wen J."/>
            <person name="Xiao J."/>
            <person name="Cui J."/>
            <person name="Nguyen K.B."/>
            <person name="Engel J.L."/>
            <person name="Coon J.J."/>
            <person name="Grishin N."/>
            <person name="Pinna L.A."/>
            <person name="Pagliarini D.J."/>
            <person name="Dixon J.E."/>
        </authorList>
    </citation>
    <scope>PHOSPHORYLATION AT SER-114</scope>
</reference>
<comment type="function">
    <text evidence="4 5">Acts as a regulator of programmed cell death, mediating both autophagy and apoptosis.</text>
</comment>
<comment type="interaction">
    <interactant intactId="EBI-715362">
        <id>Q9H8M9</id>
    </interactant>
    <interactant intactId="EBI-702665">
        <id>P02724</id>
        <label>GYPA</label>
    </interactant>
    <organismsDiffer>false</organismsDiffer>
    <experiments>3</experiments>
</comment>
<comment type="interaction">
    <interactant intactId="EBI-715362">
        <id>Q9H8M9</id>
    </interactant>
    <interactant intactId="EBI-12070086">
        <id>Q5J8X5</id>
        <label>MS4A13</label>
    </interactant>
    <organismsDiffer>false</organismsDiffer>
    <experiments>3</experiments>
</comment>
<comment type="interaction">
    <interactant intactId="EBI-715362">
        <id>Q9H8M9</id>
    </interactant>
    <interactant intactId="EBI-744081">
        <id>Q96EQ0</id>
        <label>SGTB</label>
    </interactant>
    <organismsDiffer>false</organismsDiffer>
    <experiments>3</experiments>
</comment>
<comment type="interaction">
    <interactant intactId="EBI-715362">
        <id>Q9H8M9</id>
    </interactant>
    <interactant intactId="EBI-8652667">
        <id>O14817</id>
        <label>TSPAN4</label>
    </interactant>
    <organismsDiffer>false</organismsDiffer>
    <experiments>3</experiments>
</comment>
<comment type="subcellular location">
    <subcellularLocation>
        <location evidence="4">Endoplasmic reticulum membrane</location>
        <topology evidence="4">Single-pass membrane protein</topology>
    </subcellularLocation>
    <subcellularLocation>
        <location evidence="4">Lysosome membrane</location>
        <topology evidence="4">Single-pass membrane protein</topology>
    </subcellularLocation>
</comment>
<comment type="tissue specificity">
    <text evidence="4">Expressed in lung, kidney, liver, pancreas, placenta, but not in heart and skeletal muscle.</text>
</comment>
<comment type="similarity">
    <text evidence="7">Belongs to the EVA1 family.</text>
</comment>
<proteinExistence type="evidence at protein level"/>
<dbReference type="EMBL" id="AK023453">
    <property type="protein sequence ID" value="BAB14580.1"/>
    <property type="molecule type" value="mRNA"/>
</dbReference>
<dbReference type="EMBL" id="AF177337">
    <property type="protein sequence ID" value="AAG17981.1"/>
    <property type="molecule type" value="mRNA"/>
</dbReference>
<dbReference type="EMBL" id="CR457314">
    <property type="protein sequence ID" value="CAG33595.1"/>
    <property type="molecule type" value="mRNA"/>
</dbReference>
<dbReference type="EMBL" id="AC007099">
    <property type="protein sequence ID" value="AAY14774.1"/>
    <property type="molecule type" value="Genomic_DNA"/>
</dbReference>
<dbReference type="EMBL" id="CH471053">
    <property type="protein sequence ID" value="EAW99591.1"/>
    <property type="molecule type" value="Genomic_DNA"/>
</dbReference>
<dbReference type="EMBL" id="CH471053">
    <property type="protein sequence ID" value="EAW99592.1"/>
    <property type="molecule type" value="Genomic_DNA"/>
</dbReference>
<dbReference type="EMBL" id="CH471053">
    <property type="protein sequence ID" value="EAW99593.1"/>
    <property type="molecule type" value="Genomic_DNA"/>
</dbReference>
<dbReference type="EMBL" id="CH471053">
    <property type="protein sequence ID" value="EAW99594.1"/>
    <property type="molecule type" value="Genomic_DNA"/>
</dbReference>
<dbReference type="EMBL" id="BC016157">
    <property type="protein sequence ID" value="AAH16157.1"/>
    <property type="molecule type" value="mRNA"/>
</dbReference>
<dbReference type="EMBL" id="BC063016">
    <property type="protein sequence ID" value="AAH63016.1"/>
    <property type="molecule type" value="mRNA"/>
</dbReference>
<dbReference type="CCDS" id="CCDS1959.1"/>
<dbReference type="RefSeq" id="NP_001128504.1">
    <property type="nucleotide sequence ID" value="NM_001135032.2"/>
</dbReference>
<dbReference type="RefSeq" id="NP_001356453.1">
    <property type="nucleotide sequence ID" value="NM_001369524.1"/>
</dbReference>
<dbReference type="RefSeq" id="NP_001356454.1">
    <property type="nucleotide sequence ID" value="NM_001369525.1"/>
</dbReference>
<dbReference type="RefSeq" id="NP_115557.1">
    <property type="nucleotide sequence ID" value="NM_032181.3"/>
</dbReference>
<dbReference type="BioGRID" id="123910">
    <property type="interactions" value="12"/>
</dbReference>
<dbReference type="FunCoup" id="Q9H8M9">
    <property type="interactions" value="369"/>
</dbReference>
<dbReference type="IntAct" id="Q9H8M9">
    <property type="interactions" value="9"/>
</dbReference>
<dbReference type="MINT" id="Q9H8M9"/>
<dbReference type="STRING" id="9606.ENSP00000377490"/>
<dbReference type="TCDB" id="9.A.15.2.1">
    <property type="family name" value="the autophagy-related phagophore-formation transporter (apt) family"/>
</dbReference>
<dbReference type="iPTMnet" id="Q9H8M9"/>
<dbReference type="PhosphoSitePlus" id="Q9H8M9"/>
<dbReference type="BioMuta" id="EVA1A"/>
<dbReference type="DMDM" id="74733858"/>
<dbReference type="jPOST" id="Q9H8M9"/>
<dbReference type="MassIVE" id="Q9H8M9"/>
<dbReference type="PaxDb" id="9606-ENSP00000233712"/>
<dbReference type="PeptideAtlas" id="Q9H8M9"/>
<dbReference type="ProteomicsDB" id="81229"/>
<dbReference type="Pumba" id="Q9H8M9"/>
<dbReference type="Antibodypedia" id="2359">
    <property type="antibodies" value="138 antibodies from 22 providers"/>
</dbReference>
<dbReference type="DNASU" id="84141"/>
<dbReference type="Ensembl" id="ENST00000233712.5">
    <property type="protein sequence ID" value="ENSP00000233712.1"/>
    <property type="gene ID" value="ENSG00000115363.14"/>
</dbReference>
<dbReference type="Ensembl" id="ENST00000393913.8">
    <property type="protein sequence ID" value="ENSP00000377490.3"/>
    <property type="gene ID" value="ENSG00000115363.14"/>
</dbReference>
<dbReference type="Ensembl" id="ENST00000410071.5">
    <property type="protein sequence ID" value="ENSP00000386930.1"/>
    <property type="gene ID" value="ENSG00000115363.14"/>
</dbReference>
<dbReference type="Ensembl" id="ENST00000410113.5">
    <property type="protein sequence ID" value="ENSP00000386435.1"/>
    <property type="gene ID" value="ENSG00000115363.14"/>
</dbReference>
<dbReference type="GeneID" id="84141"/>
<dbReference type="KEGG" id="hsa:84141"/>
<dbReference type="MANE-Select" id="ENST00000393913.8">
    <property type="protein sequence ID" value="ENSP00000377490.3"/>
    <property type="RefSeq nucleotide sequence ID" value="NM_001135032.2"/>
    <property type="RefSeq protein sequence ID" value="NP_001128504.1"/>
</dbReference>
<dbReference type="UCSC" id="uc002sni.3">
    <property type="organism name" value="human"/>
</dbReference>
<dbReference type="AGR" id="HGNC:25816"/>
<dbReference type="CTD" id="84141"/>
<dbReference type="DisGeNET" id="84141"/>
<dbReference type="GeneCards" id="EVA1A"/>
<dbReference type="HGNC" id="HGNC:25816">
    <property type="gene designation" value="EVA1A"/>
</dbReference>
<dbReference type="HPA" id="ENSG00000115363">
    <property type="expression patterns" value="Tissue enriched (liver)"/>
</dbReference>
<dbReference type="MIM" id="618990">
    <property type="type" value="gene"/>
</dbReference>
<dbReference type="neXtProt" id="NX_Q9H8M9"/>
<dbReference type="OpenTargets" id="ENSG00000115363"/>
<dbReference type="PharmGKB" id="PA162387354"/>
<dbReference type="VEuPathDB" id="HostDB:ENSG00000115363"/>
<dbReference type="eggNOG" id="ENOG502S091">
    <property type="taxonomic scope" value="Eukaryota"/>
</dbReference>
<dbReference type="GeneTree" id="ENSGT00940000154096"/>
<dbReference type="InParanoid" id="Q9H8M9"/>
<dbReference type="OMA" id="VMKISCH"/>
<dbReference type="OrthoDB" id="5970528at2759"/>
<dbReference type="PAN-GO" id="Q9H8M9">
    <property type="GO annotations" value="0 GO annotations based on evolutionary models"/>
</dbReference>
<dbReference type="PhylomeDB" id="Q9H8M9"/>
<dbReference type="TreeFam" id="TF352986"/>
<dbReference type="PathwayCommons" id="Q9H8M9"/>
<dbReference type="Reactome" id="R-HSA-381426">
    <property type="pathway name" value="Regulation of Insulin-like Growth Factor (IGF) transport and uptake by Insulin-like Growth Factor Binding Proteins (IGFBPs)"/>
</dbReference>
<dbReference type="Reactome" id="R-HSA-8957275">
    <property type="pathway name" value="Post-translational protein phosphorylation"/>
</dbReference>
<dbReference type="SignaLink" id="Q9H8M9"/>
<dbReference type="BioGRID-ORCS" id="84141">
    <property type="hits" value="17 hits in 1145 CRISPR screens"/>
</dbReference>
<dbReference type="ChiTaRS" id="EVA1A">
    <property type="organism name" value="human"/>
</dbReference>
<dbReference type="GenomeRNAi" id="84141"/>
<dbReference type="Pharos" id="Q9H8M9">
    <property type="development level" value="Tbio"/>
</dbReference>
<dbReference type="PRO" id="PR:Q9H8M9"/>
<dbReference type="Proteomes" id="UP000005640">
    <property type="component" value="Chromosome 2"/>
</dbReference>
<dbReference type="RNAct" id="Q9H8M9">
    <property type="molecule type" value="protein"/>
</dbReference>
<dbReference type="Bgee" id="ENSG00000115363">
    <property type="expression patterns" value="Expressed in right lobe of liver and 108 other cell types or tissues"/>
</dbReference>
<dbReference type="ExpressionAtlas" id="Q9H8M9">
    <property type="expression patterns" value="baseline and differential"/>
</dbReference>
<dbReference type="GO" id="GO:0005788">
    <property type="term" value="C:endoplasmic reticulum lumen"/>
    <property type="evidence" value="ECO:0000304"/>
    <property type="project" value="Reactome"/>
</dbReference>
<dbReference type="GO" id="GO:0005789">
    <property type="term" value="C:endoplasmic reticulum membrane"/>
    <property type="evidence" value="ECO:0007669"/>
    <property type="project" value="UniProtKB-SubCell"/>
</dbReference>
<dbReference type="GO" id="GO:0043231">
    <property type="term" value="C:intracellular membrane-bounded organelle"/>
    <property type="evidence" value="ECO:0000314"/>
    <property type="project" value="HPA"/>
</dbReference>
<dbReference type="GO" id="GO:0005765">
    <property type="term" value="C:lysosomal membrane"/>
    <property type="evidence" value="ECO:0007669"/>
    <property type="project" value="UniProtKB-SubCell"/>
</dbReference>
<dbReference type="GO" id="GO:0005886">
    <property type="term" value="C:plasma membrane"/>
    <property type="evidence" value="ECO:0000314"/>
    <property type="project" value="HPA"/>
</dbReference>
<dbReference type="GO" id="GO:0006915">
    <property type="term" value="P:apoptotic process"/>
    <property type="evidence" value="ECO:0007669"/>
    <property type="project" value="UniProtKB-KW"/>
</dbReference>
<dbReference type="GO" id="GO:0006914">
    <property type="term" value="P:autophagy"/>
    <property type="evidence" value="ECO:0007669"/>
    <property type="project" value="UniProtKB-KW"/>
</dbReference>
<dbReference type="GO" id="GO:0003214">
    <property type="term" value="P:cardiac left ventricle morphogenesis"/>
    <property type="evidence" value="ECO:0007669"/>
    <property type="project" value="Ensembl"/>
</dbReference>
<dbReference type="GO" id="GO:0097709">
    <property type="term" value="P:connective tissue replacement"/>
    <property type="evidence" value="ECO:0007669"/>
    <property type="project" value="Ensembl"/>
</dbReference>
<dbReference type="GO" id="GO:0006112">
    <property type="term" value="P:energy reserve metabolic process"/>
    <property type="evidence" value="ECO:0007669"/>
    <property type="project" value="Ensembl"/>
</dbReference>
<dbReference type="GO" id="GO:0030324">
    <property type="term" value="P:lung development"/>
    <property type="evidence" value="ECO:0007669"/>
    <property type="project" value="Ensembl"/>
</dbReference>
<dbReference type="GO" id="GO:0009791">
    <property type="term" value="P:post-embryonic development"/>
    <property type="evidence" value="ECO:0007669"/>
    <property type="project" value="Ensembl"/>
</dbReference>
<dbReference type="GO" id="GO:0031929">
    <property type="term" value="P:TOR signaling"/>
    <property type="evidence" value="ECO:0007669"/>
    <property type="project" value="Ensembl"/>
</dbReference>
<dbReference type="InterPro" id="IPR052461">
    <property type="entry name" value="EVA1_A/B"/>
</dbReference>
<dbReference type="InterPro" id="IPR039500">
    <property type="entry name" value="EVA1_dom"/>
</dbReference>
<dbReference type="PANTHER" id="PTHR48422:SF1">
    <property type="entry name" value="PROTEIN EVA-1 HOMOLOG A"/>
    <property type="match status" value="1"/>
</dbReference>
<dbReference type="PANTHER" id="PTHR48422">
    <property type="entry name" value="PROTEIN EVA-1 HOMOLOG B-RELATED"/>
    <property type="match status" value="1"/>
</dbReference>
<dbReference type="Pfam" id="PF14851">
    <property type="entry name" value="FAM176"/>
    <property type="match status" value="1"/>
</dbReference>
<name>EVA1A_HUMAN</name>
<sequence>MRLPLSHSPEHVEMALLSNILAAYSFVSENPERAALYFVSGVCIGLVLTLAALVIRISCHTDCRRRPGKKFLQDRESSSDSSDSEDGSEDTVSDLSVRRHRRFERTLNKNVFTSAEELERAQRLEERERIIREIWMNGQPEVPGTRSLNRYY</sequence>
<evidence type="ECO:0000250" key="1">
    <source>
        <dbReference type="UniProtKB" id="Q91WM6"/>
    </source>
</evidence>
<evidence type="ECO:0000255" key="2"/>
<evidence type="ECO:0000256" key="3">
    <source>
        <dbReference type="SAM" id="MobiDB-lite"/>
    </source>
</evidence>
<evidence type="ECO:0000269" key="4">
    <source>
    </source>
</evidence>
<evidence type="ECO:0000269" key="5">
    <source>
    </source>
</evidence>
<evidence type="ECO:0000269" key="6">
    <source>
    </source>
</evidence>
<evidence type="ECO:0000305" key="7"/>
<protein>
    <recommendedName>
        <fullName>Protein eva-1 homolog A</fullName>
    </recommendedName>
    <alternativeName>
        <fullName>Protein FAM176A</fullName>
    </alternativeName>
    <alternativeName>
        <fullName>Transmembrane protein 166</fullName>
    </alternativeName>
</protein>
<feature type="chain" id="PRO_0000278671" description="Protein eva-1 homolog A">
    <location>
        <begin position="1"/>
        <end position="152"/>
    </location>
</feature>
<feature type="transmembrane region" description="Helical" evidence="2">
    <location>
        <begin position="35"/>
        <end position="55"/>
    </location>
</feature>
<feature type="region of interest" description="Necessary for the localization and biological activity">
    <location>
        <begin position="1"/>
        <end position="60"/>
    </location>
</feature>
<feature type="region of interest" description="Disordered" evidence="3">
    <location>
        <begin position="70"/>
        <end position="97"/>
    </location>
</feature>
<feature type="compositionally biased region" description="Acidic residues" evidence="3">
    <location>
        <begin position="82"/>
        <end position="92"/>
    </location>
</feature>
<feature type="modified residue" description="Phosphothreonine" evidence="1">
    <location>
        <position position="106"/>
    </location>
</feature>
<feature type="modified residue" description="Phosphoserine; by FAM20C" evidence="6">
    <location>
        <position position="114"/>
    </location>
</feature>
<feature type="sequence variant" id="VAR_054077" description="In dbSNP:rs11126472.">
    <original>R</original>
    <variation>H</variation>
    <location>
        <position position="150"/>
    </location>
</feature>
<feature type="sequence conflict" description="In Ref. 2; AAG17981." evidence="7" ref="2">
    <original>Y</original>
    <variation>C</variation>
    <location>
        <position position="37"/>
    </location>
</feature>
<organism>
    <name type="scientific">Homo sapiens</name>
    <name type="common">Human</name>
    <dbReference type="NCBI Taxonomy" id="9606"/>
    <lineage>
        <taxon>Eukaryota</taxon>
        <taxon>Metazoa</taxon>
        <taxon>Chordata</taxon>
        <taxon>Craniata</taxon>
        <taxon>Vertebrata</taxon>
        <taxon>Euteleostomi</taxon>
        <taxon>Mammalia</taxon>
        <taxon>Eutheria</taxon>
        <taxon>Euarchontoglires</taxon>
        <taxon>Primates</taxon>
        <taxon>Haplorrhini</taxon>
        <taxon>Catarrhini</taxon>
        <taxon>Hominidae</taxon>
        <taxon>Homo</taxon>
    </lineage>
</organism>
<accession>Q9H8M9</accession>
<accession>D6W5J3</accession>
<accession>Q9HC41</accession>